<gene>
    <name evidence="1" type="primary">hslU</name>
    <name type="ordered locus">BCA_3928</name>
</gene>
<name>HSLU_BACC3</name>
<reference key="1">
    <citation type="submission" date="2009-02" db="EMBL/GenBank/DDBJ databases">
        <title>Genome sequence of Bacillus cereus 03BB102.</title>
        <authorList>
            <person name="Dodson R.J."/>
            <person name="Jackson P."/>
            <person name="Munk A.C."/>
            <person name="Brettin T."/>
            <person name="Bruce D."/>
            <person name="Detter C."/>
            <person name="Tapia R."/>
            <person name="Han C."/>
            <person name="Sutton G."/>
            <person name="Sims D."/>
        </authorList>
    </citation>
    <scope>NUCLEOTIDE SEQUENCE [LARGE SCALE GENOMIC DNA]</scope>
    <source>
        <strain>03BB102</strain>
    </source>
</reference>
<dbReference type="EMBL" id="CP001407">
    <property type="protein sequence ID" value="ACO29848.1"/>
    <property type="molecule type" value="Genomic_DNA"/>
</dbReference>
<dbReference type="RefSeq" id="WP_000550082.1">
    <property type="nucleotide sequence ID" value="NZ_CP009318.1"/>
</dbReference>
<dbReference type="SMR" id="C1EP53"/>
<dbReference type="KEGG" id="bcx:BCA_3928"/>
<dbReference type="PATRIC" id="fig|572264.18.peg.3885"/>
<dbReference type="Proteomes" id="UP000002210">
    <property type="component" value="Chromosome"/>
</dbReference>
<dbReference type="GO" id="GO:0009376">
    <property type="term" value="C:HslUV protease complex"/>
    <property type="evidence" value="ECO:0007669"/>
    <property type="project" value="UniProtKB-UniRule"/>
</dbReference>
<dbReference type="GO" id="GO:0005524">
    <property type="term" value="F:ATP binding"/>
    <property type="evidence" value="ECO:0007669"/>
    <property type="project" value="UniProtKB-UniRule"/>
</dbReference>
<dbReference type="GO" id="GO:0016887">
    <property type="term" value="F:ATP hydrolysis activity"/>
    <property type="evidence" value="ECO:0007669"/>
    <property type="project" value="InterPro"/>
</dbReference>
<dbReference type="GO" id="GO:0008233">
    <property type="term" value="F:peptidase activity"/>
    <property type="evidence" value="ECO:0007669"/>
    <property type="project" value="InterPro"/>
</dbReference>
<dbReference type="GO" id="GO:0036402">
    <property type="term" value="F:proteasome-activating activity"/>
    <property type="evidence" value="ECO:0007669"/>
    <property type="project" value="UniProtKB-UniRule"/>
</dbReference>
<dbReference type="GO" id="GO:0043335">
    <property type="term" value="P:protein unfolding"/>
    <property type="evidence" value="ECO:0007669"/>
    <property type="project" value="UniProtKB-UniRule"/>
</dbReference>
<dbReference type="GO" id="GO:0051603">
    <property type="term" value="P:proteolysis involved in protein catabolic process"/>
    <property type="evidence" value="ECO:0007669"/>
    <property type="project" value="TreeGrafter"/>
</dbReference>
<dbReference type="CDD" id="cd19498">
    <property type="entry name" value="RecA-like_HslU"/>
    <property type="match status" value="1"/>
</dbReference>
<dbReference type="FunFam" id="3.40.50.300:FF:000220">
    <property type="entry name" value="ATP-dependent protease ATPase subunit HslU"/>
    <property type="match status" value="1"/>
</dbReference>
<dbReference type="Gene3D" id="1.10.8.60">
    <property type="match status" value="1"/>
</dbReference>
<dbReference type="Gene3D" id="1.10.8.10">
    <property type="entry name" value="DNA helicase RuvA subunit, C-terminal domain"/>
    <property type="match status" value="1"/>
</dbReference>
<dbReference type="Gene3D" id="3.40.50.300">
    <property type="entry name" value="P-loop containing nucleotide triphosphate hydrolases"/>
    <property type="match status" value="1"/>
</dbReference>
<dbReference type="HAMAP" id="MF_00249">
    <property type="entry name" value="HslU"/>
    <property type="match status" value="1"/>
</dbReference>
<dbReference type="InterPro" id="IPR003593">
    <property type="entry name" value="AAA+_ATPase"/>
</dbReference>
<dbReference type="InterPro" id="IPR050052">
    <property type="entry name" value="ATP-dep_Clp_protease_ClpX"/>
</dbReference>
<dbReference type="InterPro" id="IPR003959">
    <property type="entry name" value="ATPase_AAA_core"/>
</dbReference>
<dbReference type="InterPro" id="IPR019489">
    <property type="entry name" value="Clp_ATPase_C"/>
</dbReference>
<dbReference type="InterPro" id="IPR004491">
    <property type="entry name" value="HslU"/>
</dbReference>
<dbReference type="InterPro" id="IPR027417">
    <property type="entry name" value="P-loop_NTPase"/>
</dbReference>
<dbReference type="NCBIfam" id="TIGR00390">
    <property type="entry name" value="hslU"/>
    <property type="match status" value="1"/>
</dbReference>
<dbReference type="NCBIfam" id="NF003544">
    <property type="entry name" value="PRK05201.1"/>
    <property type="match status" value="1"/>
</dbReference>
<dbReference type="PANTHER" id="PTHR48102">
    <property type="entry name" value="ATP-DEPENDENT CLP PROTEASE ATP-BINDING SUBUNIT CLPX-LIKE, MITOCHONDRIAL-RELATED"/>
    <property type="match status" value="1"/>
</dbReference>
<dbReference type="PANTHER" id="PTHR48102:SF3">
    <property type="entry name" value="ATP-DEPENDENT PROTEASE ATPASE SUBUNIT HSLU"/>
    <property type="match status" value="1"/>
</dbReference>
<dbReference type="Pfam" id="PF00004">
    <property type="entry name" value="AAA"/>
    <property type="match status" value="1"/>
</dbReference>
<dbReference type="Pfam" id="PF07724">
    <property type="entry name" value="AAA_2"/>
    <property type="match status" value="1"/>
</dbReference>
<dbReference type="Pfam" id="PF10431">
    <property type="entry name" value="ClpB_D2-small"/>
    <property type="match status" value="1"/>
</dbReference>
<dbReference type="SMART" id="SM00382">
    <property type="entry name" value="AAA"/>
    <property type="match status" value="1"/>
</dbReference>
<dbReference type="SMART" id="SM01086">
    <property type="entry name" value="ClpB_D2-small"/>
    <property type="match status" value="1"/>
</dbReference>
<dbReference type="SUPFAM" id="SSF52540">
    <property type="entry name" value="P-loop containing nucleoside triphosphate hydrolases"/>
    <property type="match status" value="1"/>
</dbReference>
<accession>C1EP53</accession>
<evidence type="ECO:0000255" key="1">
    <source>
        <dbReference type="HAMAP-Rule" id="MF_00249"/>
    </source>
</evidence>
<organism>
    <name type="scientific">Bacillus cereus (strain 03BB102)</name>
    <dbReference type="NCBI Taxonomy" id="572264"/>
    <lineage>
        <taxon>Bacteria</taxon>
        <taxon>Bacillati</taxon>
        <taxon>Bacillota</taxon>
        <taxon>Bacilli</taxon>
        <taxon>Bacillales</taxon>
        <taxon>Bacillaceae</taxon>
        <taxon>Bacillus</taxon>
        <taxon>Bacillus cereus group</taxon>
    </lineage>
</organism>
<feature type="chain" id="PRO_1000125427" description="ATP-dependent protease ATPase subunit HslU">
    <location>
        <begin position="1"/>
        <end position="463"/>
    </location>
</feature>
<feature type="binding site" evidence="1">
    <location>
        <position position="19"/>
    </location>
    <ligand>
        <name>ATP</name>
        <dbReference type="ChEBI" id="CHEBI:30616"/>
    </ligand>
</feature>
<feature type="binding site" evidence="1">
    <location>
        <begin position="61"/>
        <end position="66"/>
    </location>
    <ligand>
        <name>ATP</name>
        <dbReference type="ChEBI" id="CHEBI:30616"/>
    </ligand>
</feature>
<feature type="binding site" evidence="1">
    <location>
        <position position="277"/>
    </location>
    <ligand>
        <name>ATP</name>
        <dbReference type="ChEBI" id="CHEBI:30616"/>
    </ligand>
</feature>
<feature type="binding site" evidence="1">
    <location>
        <position position="341"/>
    </location>
    <ligand>
        <name>ATP</name>
        <dbReference type="ChEBI" id="CHEBI:30616"/>
    </ligand>
</feature>
<feature type="binding site" evidence="1">
    <location>
        <position position="413"/>
    </location>
    <ligand>
        <name>ATP</name>
        <dbReference type="ChEBI" id="CHEBI:30616"/>
    </ligand>
</feature>
<comment type="function">
    <text evidence="1">ATPase subunit of a proteasome-like degradation complex; this subunit has chaperone activity. The binding of ATP and its subsequent hydrolysis by HslU are essential for unfolding of protein substrates subsequently hydrolyzed by HslV. HslU recognizes the N-terminal part of its protein substrates and unfolds these before they are guided to HslV for hydrolysis.</text>
</comment>
<comment type="subunit">
    <text evidence="1">A double ring-shaped homohexamer of HslV is capped on each side by a ring-shaped HslU homohexamer. The assembly of the HslU/HslV complex is dependent on binding of ATP.</text>
</comment>
<comment type="subcellular location">
    <subcellularLocation>
        <location evidence="1">Cytoplasm</location>
    </subcellularLocation>
</comment>
<comment type="similarity">
    <text evidence="1">Belongs to the ClpX chaperone family. HslU subfamily.</text>
</comment>
<protein>
    <recommendedName>
        <fullName evidence="1">ATP-dependent protease ATPase subunit HslU</fullName>
    </recommendedName>
    <alternativeName>
        <fullName evidence="1">Unfoldase HslU</fullName>
    </alternativeName>
</protein>
<keyword id="KW-0067">ATP-binding</keyword>
<keyword id="KW-0143">Chaperone</keyword>
<keyword id="KW-0963">Cytoplasm</keyword>
<keyword id="KW-0547">Nucleotide-binding</keyword>
<sequence length="463" mass="52183">MHLHFTPRQIVEKLDQYIIGQKDAKKAVAVALRNRYRRSKLAENLRDEIAPKNILMIGPTGVGKTEVARRMAKLVGAPFIKVEATKFTEVGYVGRDVESMVRDLVETSVRIVKEEMVVKVQDKAEEQANQRLVEILVPSPEKQSGFKNPLEMLFGGAQNSNQTTDSQEDVEIEKKRQDVERKLAAGLLEDEIVSIEVTEQQSSMFDMLQGTGMEQMGMNFQDALGSFMPKKTKKRKLSVKEARKVLTNEEAQRLIDMDEVTQEAVYRAEQLGIIFIDEIDKIAGKQSNSVDVSREGVQRDILPIVEGSNVATKYGSVKTDYILFVAAGAFHMSKPSDLIPELQGRFPIRVELTKLSTDDFVKILIEPDNALIKQYMALLATEGIEIEFSDEAIRKIAEIAYQVNQDTDNIGARRLHTIMEKLLEDLSFEASEITLEKITITPQYVEEKLATIAKNKDVSQFIL</sequence>
<proteinExistence type="inferred from homology"/>